<accession>Q4K592</accession>
<sequence>MHCPFCGANDTKVIDSRLVAEGEQVRRRRECLACGERFTTFETAELVMPRLIKTDGSRQPFDEEKLRAGMQRALEKRPVSVERLEAALVHIKHKLRATGEREVKSLVVGELVMTELQKLDEVAYIRFASVYRRFQDLNEFREEIDRLAREPAKQ</sequence>
<protein>
    <recommendedName>
        <fullName evidence="1">Transcriptional repressor NrdR</fullName>
    </recommendedName>
</protein>
<name>NRDR_PSEF5</name>
<organism>
    <name type="scientific">Pseudomonas fluorescens (strain ATCC BAA-477 / NRRL B-23932 / Pf-5)</name>
    <dbReference type="NCBI Taxonomy" id="220664"/>
    <lineage>
        <taxon>Bacteria</taxon>
        <taxon>Pseudomonadati</taxon>
        <taxon>Pseudomonadota</taxon>
        <taxon>Gammaproteobacteria</taxon>
        <taxon>Pseudomonadales</taxon>
        <taxon>Pseudomonadaceae</taxon>
        <taxon>Pseudomonas</taxon>
    </lineage>
</organism>
<reference key="1">
    <citation type="journal article" date="2005" name="Nat. Biotechnol.">
        <title>Complete genome sequence of the plant commensal Pseudomonas fluorescens Pf-5.</title>
        <authorList>
            <person name="Paulsen I.T."/>
            <person name="Press C.M."/>
            <person name="Ravel J."/>
            <person name="Kobayashi D.Y."/>
            <person name="Myers G.S.A."/>
            <person name="Mavrodi D.V."/>
            <person name="DeBoy R.T."/>
            <person name="Seshadri R."/>
            <person name="Ren Q."/>
            <person name="Madupu R."/>
            <person name="Dodson R.J."/>
            <person name="Durkin A.S."/>
            <person name="Brinkac L.M."/>
            <person name="Daugherty S.C."/>
            <person name="Sullivan S.A."/>
            <person name="Rosovitz M.J."/>
            <person name="Gwinn M.L."/>
            <person name="Zhou L."/>
            <person name="Schneider D.J."/>
            <person name="Cartinhour S.W."/>
            <person name="Nelson W.C."/>
            <person name="Weidman J."/>
            <person name="Watkins K."/>
            <person name="Tran K."/>
            <person name="Khouri H."/>
            <person name="Pierson E.A."/>
            <person name="Pierson L.S. III"/>
            <person name="Thomashow L.S."/>
            <person name="Loper J.E."/>
        </authorList>
    </citation>
    <scope>NUCLEOTIDE SEQUENCE [LARGE SCALE GENOMIC DNA]</scope>
    <source>
        <strain>ATCC BAA-477 / NRRL B-23932 / Pf-5</strain>
    </source>
</reference>
<gene>
    <name evidence="1" type="primary">nrdR</name>
    <name type="ordered locus">PFL_5523</name>
</gene>
<dbReference type="EMBL" id="CP000076">
    <property type="protein sequence ID" value="AAY94729.1"/>
    <property type="status" value="ALT_INIT"/>
    <property type="molecule type" value="Genomic_DNA"/>
</dbReference>
<dbReference type="RefSeq" id="WP_019095943.1">
    <property type="nucleotide sequence ID" value="NC_004129.6"/>
</dbReference>
<dbReference type="SMR" id="Q4K592"/>
<dbReference type="STRING" id="220664.PFL_5523"/>
<dbReference type="GeneID" id="57478471"/>
<dbReference type="KEGG" id="pfl:PFL_5523"/>
<dbReference type="PATRIC" id="fig|220664.5.peg.5638"/>
<dbReference type="eggNOG" id="COG1327">
    <property type="taxonomic scope" value="Bacteria"/>
</dbReference>
<dbReference type="HOGENOM" id="CLU_108412_0_1_6"/>
<dbReference type="Proteomes" id="UP000008540">
    <property type="component" value="Chromosome"/>
</dbReference>
<dbReference type="GO" id="GO:0005524">
    <property type="term" value="F:ATP binding"/>
    <property type="evidence" value="ECO:0007669"/>
    <property type="project" value="UniProtKB-KW"/>
</dbReference>
<dbReference type="GO" id="GO:0003677">
    <property type="term" value="F:DNA binding"/>
    <property type="evidence" value="ECO:0007669"/>
    <property type="project" value="UniProtKB-KW"/>
</dbReference>
<dbReference type="GO" id="GO:0008270">
    <property type="term" value="F:zinc ion binding"/>
    <property type="evidence" value="ECO:0007669"/>
    <property type="project" value="UniProtKB-UniRule"/>
</dbReference>
<dbReference type="GO" id="GO:0045892">
    <property type="term" value="P:negative regulation of DNA-templated transcription"/>
    <property type="evidence" value="ECO:0007669"/>
    <property type="project" value="UniProtKB-UniRule"/>
</dbReference>
<dbReference type="HAMAP" id="MF_00440">
    <property type="entry name" value="NrdR"/>
    <property type="match status" value="1"/>
</dbReference>
<dbReference type="InterPro" id="IPR005144">
    <property type="entry name" value="ATP-cone_dom"/>
</dbReference>
<dbReference type="InterPro" id="IPR055173">
    <property type="entry name" value="NrdR-like_N"/>
</dbReference>
<dbReference type="InterPro" id="IPR003796">
    <property type="entry name" value="RNR_NrdR-like"/>
</dbReference>
<dbReference type="NCBIfam" id="TIGR00244">
    <property type="entry name" value="transcriptional regulator NrdR"/>
    <property type="match status" value="1"/>
</dbReference>
<dbReference type="PANTHER" id="PTHR30455">
    <property type="entry name" value="TRANSCRIPTIONAL REPRESSOR NRDR"/>
    <property type="match status" value="1"/>
</dbReference>
<dbReference type="PANTHER" id="PTHR30455:SF2">
    <property type="entry name" value="TRANSCRIPTIONAL REPRESSOR NRDR"/>
    <property type="match status" value="1"/>
</dbReference>
<dbReference type="Pfam" id="PF03477">
    <property type="entry name" value="ATP-cone"/>
    <property type="match status" value="1"/>
</dbReference>
<dbReference type="Pfam" id="PF22811">
    <property type="entry name" value="Zn_ribbon_NrdR"/>
    <property type="match status" value="1"/>
</dbReference>
<dbReference type="PROSITE" id="PS51161">
    <property type="entry name" value="ATP_CONE"/>
    <property type="match status" value="1"/>
</dbReference>
<comment type="function">
    <text evidence="1">Negatively regulates transcription of bacterial ribonucleotide reductase nrd genes and operons by binding to NrdR-boxes.</text>
</comment>
<comment type="cofactor">
    <cofactor evidence="1">
        <name>Zn(2+)</name>
        <dbReference type="ChEBI" id="CHEBI:29105"/>
    </cofactor>
    <text evidence="1">Binds 1 zinc ion.</text>
</comment>
<comment type="similarity">
    <text evidence="1">Belongs to the NrdR family.</text>
</comment>
<comment type="sequence caution" evidence="2">
    <conflict type="erroneous initiation">
        <sequence resource="EMBL-CDS" id="AAY94729"/>
    </conflict>
</comment>
<proteinExistence type="inferred from homology"/>
<keyword id="KW-0067">ATP-binding</keyword>
<keyword id="KW-0238">DNA-binding</keyword>
<keyword id="KW-0479">Metal-binding</keyword>
<keyword id="KW-0547">Nucleotide-binding</keyword>
<keyword id="KW-0678">Repressor</keyword>
<keyword id="KW-0804">Transcription</keyword>
<keyword id="KW-0805">Transcription regulation</keyword>
<keyword id="KW-0862">Zinc</keyword>
<keyword id="KW-0863">Zinc-finger</keyword>
<evidence type="ECO:0000255" key="1">
    <source>
        <dbReference type="HAMAP-Rule" id="MF_00440"/>
    </source>
</evidence>
<evidence type="ECO:0000305" key="2"/>
<feature type="chain" id="PRO_0000230881" description="Transcriptional repressor NrdR">
    <location>
        <begin position="1"/>
        <end position="154"/>
    </location>
</feature>
<feature type="domain" description="ATP-cone" evidence="1">
    <location>
        <begin position="49"/>
        <end position="139"/>
    </location>
</feature>
<feature type="zinc finger region" evidence="1">
    <location>
        <begin position="3"/>
        <end position="34"/>
    </location>
</feature>